<evidence type="ECO:0000255" key="1"/>
<evidence type="ECO:0000255" key="2">
    <source>
        <dbReference type="PROSITE-ProRule" id="PRU00116"/>
    </source>
</evidence>
<evidence type="ECO:0000256" key="3">
    <source>
        <dbReference type="SAM" id="MobiDB-lite"/>
    </source>
</evidence>
<dbReference type="EMBL" id="BC079282">
    <property type="protein sequence ID" value="AAH79282.1"/>
    <property type="molecule type" value="mRNA"/>
</dbReference>
<dbReference type="RefSeq" id="NP_001020324.1">
    <property type="nucleotide sequence ID" value="NM_001025153.1"/>
</dbReference>
<dbReference type="SMR" id="Q6AXX0"/>
<dbReference type="FunCoup" id="Q6AXX0">
    <property type="interactions" value="10"/>
</dbReference>
<dbReference type="STRING" id="10116.ENSRNOP00000074152"/>
<dbReference type="PhosphoSitePlus" id="Q6AXX0"/>
<dbReference type="PaxDb" id="10116-ENSRNOP00000029311"/>
<dbReference type="Ensembl" id="ENSRNOT00000039696.6">
    <property type="protein sequence ID" value="ENSRNOP00000029311.4"/>
    <property type="gene ID" value="ENSRNOG00000022445.6"/>
</dbReference>
<dbReference type="GeneID" id="501050"/>
<dbReference type="KEGG" id="rno:501050"/>
<dbReference type="UCSC" id="RGD:1565277">
    <property type="organism name" value="rat"/>
</dbReference>
<dbReference type="AGR" id="RGD:1565277"/>
<dbReference type="CTD" id="401067"/>
<dbReference type="RGD" id="1565277">
    <property type="gene designation" value="Iqcf3"/>
</dbReference>
<dbReference type="GeneTree" id="ENSGT00390000004641"/>
<dbReference type="HOGENOM" id="CLU_116787_0_0_1"/>
<dbReference type="InParanoid" id="Q6AXX0"/>
<dbReference type="OrthoDB" id="10254713at2759"/>
<dbReference type="PhylomeDB" id="Q6AXX0"/>
<dbReference type="TreeFam" id="TF337908"/>
<dbReference type="PRO" id="PR:Q6AXX0"/>
<dbReference type="Proteomes" id="UP000002494">
    <property type="component" value="Chromosome 8"/>
</dbReference>
<dbReference type="Bgee" id="ENSRNOG00000022445">
    <property type="expression patterns" value="Expressed in testis and 7 other cell types or tissues"/>
</dbReference>
<dbReference type="ExpressionAtlas" id="Q6AXX0">
    <property type="expression patterns" value="baseline"/>
</dbReference>
<dbReference type="FunFam" id="1.20.5.190:FF:000014">
    <property type="entry name" value="IQ motif containing F5"/>
    <property type="match status" value="1"/>
</dbReference>
<dbReference type="Gene3D" id="1.20.5.190">
    <property type="match status" value="1"/>
</dbReference>
<dbReference type="InterPro" id="IPR000048">
    <property type="entry name" value="IQ_motif_EF-hand-BS"/>
</dbReference>
<dbReference type="InterPro" id="IPR039887">
    <property type="entry name" value="IQCF"/>
</dbReference>
<dbReference type="PANTHER" id="PTHR21633">
    <property type="entry name" value="IQ MOTIF CONTAINING F"/>
    <property type="match status" value="1"/>
</dbReference>
<dbReference type="PANTHER" id="PTHR21633:SF10">
    <property type="entry name" value="IQ MOTIF CONTAINING F4"/>
    <property type="match status" value="1"/>
</dbReference>
<dbReference type="Pfam" id="PF00612">
    <property type="entry name" value="IQ"/>
    <property type="match status" value="1"/>
</dbReference>
<dbReference type="PROSITE" id="PS50096">
    <property type="entry name" value="IQ"/>
    <property type="match status" value="1"/>
</dbReference>
<sequence length="220" mass="25011">MELDQDQKVETPEAAENGKDEMQLEEQTQDEDTTETETETETETEAEAEGADGTILERTESVKAKLVPQAEKQIQDEKTGIKEADRAIQEQTQDDETEAEGADGAILKRSESVKVKLIPQAEKQIQDEKTGIKEADRAIQELPANAELAGVKIQAWWRGTLVRRTLLLAILSAWTIQSWWKETKSRLQGRKLHDVMRCRLRNLNLKSISRRKRPNQSSFL</sequence>
<name>IQCF3_RAT</name>
<reference key="1">
    <citation type="journal article" date="2004" name="Genome Res.">
        <title>The status, quality, and expansion of the NIH full-length cDNA project: the Mammalian Gene Collection (MGC).</title>
        <authorList>
            <consortium name="The MGC Project Team"/>
        </authorList>
    </citation>
    <scope>NUCLEOTIDE SEQUENCE [LARGE SCALE MRNA]</scope>
    <source>
        <tissue>Testis</tissue>
    </source>
</reference>
<accession>Q6AXX0</accession>
<proteinExistence type="evidence at transcript level"/>
<protein>
    <recommendedName>
        <fullName>IQ domain-containing protein F3</fullName>
    </recommendedName>
</protein>
<organism>
    <name type="scientific">Rattus norvegicus</name>
    <name type="common">Rat</name>
    <dbReference type="NCBI Taxonomy" id="10116"/>
    <lineage>
        <taxon>Eukaryota</taxon>
        <taxon>Metazoa</taxon>
        <taxon>Chordata</taxon>
        <taxon>Craniata</taxon>
        <taxon>Vertebrata</taxon>
        <taxon>Euteleostomi</taxon>
        <taxon>Mammalia</taxon>
        <taxon>Eutheria</taxon>
        <taxon>Euarchontoglires</taxon>
        <taxon>Glires</taxon>
        <taxon>Rodentia</taxon>
        <taxon>Myomorpha</taxon>
        <taxon>Muroidea</taxon>
        <taxon>Muridae</taxon>
        <taxon>Murinae</taxon>
        <taxon>Rattus</taxon>
    </lineage>
</organism>
<gene>
    <name type="primary">Iqcf3</name>
</gene>
<keyword id="KW-0175">Coiled coil</keyword>
<keyword id="KW-1185">Reference proteome</keyword>
<feature type="chain" id="PRO_0000339383" description="IQ domain-containing protein F3">
    <location>
        <begin position="1"/>
        <end position="220"/>
    </location>
</feature>
<feature type="domain" description="IQ" evidence="2">
    <location>
        <begin position="146"/>
        <end position="175"/>
    </location>
</feature>
<feature type="region of interest" description="Disordered" evidence="3">
    <location>
        <begin position="1"/>
        <end position="81"/>
    </location>
</feature>
<feature type="coiled-coil region" evidence="1">
    <location>
        <begin position="69"/>
        <end position="93"/>
    </location>
</feature>
<feature type="compositionally biased region" description="Basic and acidic residues" evidence="3">
    <location>
        <begin position="1"/>
        <end position="22"/>
    </location>
</feature>
<feature type="compositionally biased region" description="Acidic residues" evidence="3">
    <location>
        <begin position="23"/>
        <end position="50"/>
    </location>
</feature>